<name>NORM_STRR6</name>
<proteinExistence type="inferred from homology"/>
<sequence>MYKTKCLREKLVLFLKIFFPILIYQFANYSASFVDTAMTGQYNTMDLAGVSMATSIWNPFFTFLTGIVSALVPIIGHHLGRGKKEEVASDFYQFIYLALGLSVVLLGMVLFLAPTILNHIGLEAAVAAVAVRYLWFLSIGIIPLLLFSVIRSLLDSLGLTKLSMYLMLLLLPLNSGFNYLLIYGAFGVPELGGAGAGLGTSLAYWVLLGISVLVLFKQEKLKALHLEKRILLNMDKIKEGVRLGLPIGGTVFAEVAVFSVVGLIMAKFSSLIIASHQSAMNFSSLMYAFPMSISSAMAIVVSYEVGAKRFDDAKTYIGLGRWTALIFAAFTLTFLYIFRGNVASLYGNDPKFIDLTARFLTYSLFFQLADTFAAPLQGILRGYKDTVIPFYLGLLGYWGVAIPVATLFDSLTDFGAYSYWIGLIISLIVSGALYRWRLTVIMKRFESLAKSKR</sequence>
<accession>Q8DPQ6</accession>
<keyword id="KW-0050">Antiport</keyword>
<keyword id="KW-1003">Cell membrane</keyword>
<keyword id="KW-0406">Ion transport</keyword>
<keyword id="KW-0472">Membrane</keyword>
<keyword id="KW-1185">Reference proteome</keyword>
<keyword id="KW-0812">Transmembrane</keyword>
<keyword id="KW-1133">Transmembrane helix</keyword>
<keyword id="KW-0813">Transport</keyword>
<comment type="function">
    <text evidence="1">Multidrug efflux pump.</text>
</comment>
<comment type="subcellular location">
    <subcellularLocation>
        <location evidence="1">Cell membrane</location>
        <topology evidence="1">Multi-pass membrane protein</topology>
    </subcellularLocation>
</comment>
<comment type="similarity">
    <text evidence="3">Belongs to the multi antimicrobial extrusion (MATE) (TC 2.A.66.1) family.</text>
</comment>
<dbReference type="EMBL" id="AE007317">
    <property type="protein sequence ID" value="AAK99856.1"/>
    <property type="molecule type" value="Genomic_DNA"/>
</dbReference>
<dbReference type="PIR" id="D98003">
    <property type="entry name" value="D98003"/>
</dbReference>
<dbReference type="RefSeq" id="NP_358646.1">
    <property type="nucleotide sequence ID" value="NC_003098.1"/>
</dbReference>
<dbReference type="RefSeq" id="WP_000278532.1">
    <property type="nucleotide sequence ID" value="NC_003098.1"/>
</dbReference>
<dbReference type="SMR" id="Q8DPQ6"/>
<dbReference type="STRING" id="171101.spr1052"/>
<dbReference type="TCDB" id="2.A.66.1.41">
    <property type="family name" value="the multidrug/oligosaccharidyl-lipid/polysaccharide (mop) flippase superfamily"/>
</dbReference>
<dbReference type="KEGG" id="spr:spr1052"/>
<dbReference type="PATRIC" id="fig|171101.6.peg.1144"/>
<dbReference type="eggNOG" id="COG0534">
    <property type="taxonomic scope" value="Bacteria"/>
</dbReference>
<dbReference type="HOGENOM" id="CLU_012893_6_0_9"/>
<dbReference type="Proteomes" id="UP000000586">
    <property type="component" value="Chromosome"/>
</dbReference>
<dbReference type="GO" id="GO:0005886">
    <property type="term" value="C:plasma membrane"/>
    <property type="evidence" value="ECO:0000318"/>
    <property type="project" value="GO_Central"/>
</dbReference>
<dbReference type="GO" id="GO:0015297">
    <property type="term" value="F:antiporter activity"/>
    <property type="evidence" value="ECO:0007669"/>
    <property type="project" value="UniProtKB-KW"/>
</dbReference>
<dbReference type="GO" id="GO:0042910">
    <property type="term" value="F:xenobiotic transmembrane transporter activity"/>
    <property type="evidence" value="ECO:0007669"/>
    <property type="project" value="InterPro"/>
</dbReference>
<dbReference type="GO" id="GO:0006811">
    <property type="term" value="P:monoatomic ion transport"/>
    <property type="evidence" value="ECO:0007669"/>
    <property type="project" value="UniProtKB-KW"/>
</dbReference>
<dbReference type="CDD" id="cd13131">
    <property type="entry name" value="MATE_NorM_like"/>
    <property type="match status" value="1"/>
</dbReference>
<dbReference type="InterPro" id="IPR002528">
    <property type="entry name" value="MATE_fam"/>
</dbReference>
<dbReference type="InterPro" id="IPR050222">
    <property type="entry name" value="MATE_MdtK"/>
</dbReference>
<dbReference type="InterPro" id="IPR048279">
    <property type="entry name" value="MdtK-like"/>
</dbReference>
<dbReference type="NCBIfam" id="TIGR00797">
    <property type="entry name" value="matE"/>
    <property type="match status" value="1"/>
</dbReference>
<dbReference type="PANTHER" id="PTHR43298:SF2">
    <property type="entry name" value="FMN_FAD EXPORTER YEEO-RELATED"/>
    <property type="match status" value="1"/>
</dbReference>
<dbReference type="PANTHER" id="PTHR43298">
    <property type="entry name" value="MULTIDRUG RESISTANCE PROTEIN NORM-RELATED"/>
    <property type="match status" value="1"/>
</dbReference>
<dbReference type="Pfam" id="PF01554">
    <property type="entry name" value="MatE"/>
    <property type="match status" value="2"/>
</dbReference>
<dbReference type="PIRSF" id="PIRSF006603">
    <property type="entry name" value="DinF"/>
    <property type="match status" value="1"/>
</dbReference>
<gene>
    <name type="primary">norM</name>
    <name type="ordered locus">spr1052</name>
</gene>
<feature type="chain" id="PRO_0000164240" description="Probable multidrug resistance protein NorM">
    <location>
        <begin position="1"/>
        <end position="453"/>
    </location>
</feature>
<feature type="transmembrane region" description="Helical" evidence="2">
    <location>
        <begin position="12"/>
        <end position="34"/>
    </location>
</feature>
<feature type="transmembrane region" description="Helical" evidence="2">
    <location>
        <begin position="54"/>
        <end position="76"/>
    </location>
</feature>
<feature type="transmembrane region" description="Helical" evidence="2">
    <location>
        <begin position="96"/>
        <end position="118"/>
    </location>
</feature>
<feature type="transmembrane region" description="Helical" evidence="2">
    <location>
        <begin position="128"/>
        <end position="150"/>
    </location>
</feature>
<feature type="transmembrane region" description="Helical" evidence="2">
    <location>
        <begin position="162"/>
        <end position="184"/>
    </location>
</feature>
<feature type="transmembrane region" description="Helical" evidence="2">
    <location>
        <begin position="194"/>
        <end position="216"/>
    </location>
</feature>
<feature type="transmembrane region" description="Helical" evidence="2">
    <location>
        <begin position="243"/>
        <end position="265"/>
    </location>
</feature>
<feature type="transmembrane region" description="Helical" evidence="2">
    <location>
        <begin position="285"/>
        <end position="307"/>
    </location>
</feature>
<feature type="transmembrane region" description="Helical" evidence="2">
    <location>
        <begin position="319"/>
        <end position="338"/>
    </location>
</feature>
<feature type="transmembrane region" description="Helical" evidence="2">
    <location>
        <begin position="358"/>
        <end position="380"/>
    </location>
</feature>
<feature type="transmembrane region" description="Helical" evidence="2">
    <location>
        <begin position="387"/>
        <end position="406"/>
    </location>
</feature>
<feature type="transmembrane region" description="Helical" evidence="2">
    <location>
        <begin position="416"/>
        <end position="438"/>
    </location>
</feature>
<organism>
    <name type="scientific">Streptococcus pneumoniae (strain ATCC BAA-255 / R6)</name>
    <dbReference type="NCBI Taxonomy" id="171101"/>
    <lineage>
        <taxon>Bacteria</taxon>
        <taxon>Bacillati</taxon>
        <taxon>Bacillota</taxon>
        <taxon>Bacilli</taxon>
        <taxon>Lactobacillales</taxon>
        <taxon>Streptococcaceae</taxon>
        <taxon>Streptococcus</taxon>
    </lineage>
</organism>
<evidence type="ECO:0000250" key="1"/>
<evidence type="ECO:0000255" key="2"/>
<evidence type="ECO:0000305" key="3"/>
<protein>
    <recommendedName>
        <fullName>Probable multidrug resistance protein NorM</fullName>
    </recommendedName>
    <alternativeName>
        <fullName>Multidrug-efflux transporter</fullName>
    </alternativeName>
</protein>
<reference key="1">
    <citation type="journal article" date="2001" name="J. Bacteriol.">
        <title>Genome of the bacterium Streptococcus pneumoniae strain R6.</title>
        <authorList>
            <person name="Hoskins J."/>
            <person name="Alborn W.E. Jr."/>
            <person name="Arnold J."/>
            <person name="Blaszczak L.C."/>
            <person name="Burgett S."/>
            <person name="DeHoff B.S."/>
            <person name="Estrem S.T."/>
            <person name="Fritz L."/>
            <person name="Fu D.-J."/>
            <person name="Fuller W."/>
            <person name="Geringer C."/>
            <person name="Gilmour R."/>
            <person name="Glass J.S."/>
            <person name="Khoja H."/>
            <person name="Kraft A.R."/>
            <person name="Lagace R.E."/>
            <person name="LeBlanc D.J."/>
            <person name="Lee L.N."/>
            <person name="Lefkowitz E.J."/>
            <person name="Lu J."/>
            <person name="Matsushima P."/>
            <person name="McAhren S.M."/>
            <person name="McHenney M."/>
            <person name="McLeaster K."/>
            <person name="Mundy C.W."/>
            <person name="Nicas T.I."/>
            <person name="Norris F.H."/>
            <person name="O'Gara M."/>
            <person name="Peery R.B."/>
            <person name="Robertson G.T."/>
            <person name="Rockey P."/>
            <person name="Sun P.-M."/>
            <person name="Winkler M.E."/>
            <person name="Yang Y."/>
            <person name="Young-Bellido M."/>
            <person name="Zhao G."/>
            <person name="Zook C.A."/>
            <person name="Baltz R.H."/>
            <person name="Jaskunas S.R."/>
            <person name="Rosteck P.R. Jr."/>
            <person name="Skatrud P.L."/>
            <person name="Glass J.I."/>
        </authorList>
    </citation>
    <scope>NUCLEOTIDE SEQUENCE [LARGE SCALE GENOMIC DNA]</scope>
    <source>
        <strain>ATCC BAA-255 / R6</strain>
    </source>
</reference>